<accession>P9WEL0</accession>
<sequence length="404" mass="45767">MDTPPNVLSQQITDAVSKKGPVVRIGINEVAVTDTSLARTLYASFLKWPEWYESPKEKLFYGEPSLFGMTQPKEHSARRRILSNVFSKSLRSSTHVQNVTREILVERMIRQAQIPSGRSVVRDVRPVHEAFDMDFLTAFAFTPAFSTQFLNESDKFSEFRSWLRELRGGSPDAAKEAKCKLENWCLDMCRAYRASLTPTHQRISHCTADALYGAGLQESEVAAELLDHFITAKKNLAVVHTYSVYMLSIYTEVQERLRSELRSLSLDKLSIDDLASLPFFSAVISEVMRTHTEIKALTPRLVPAGGYWIPQRISGQSTFLPAGTVVSSAREALHLNEEIFPQPLSFWPERWLESADPKLAGKAQPQEMQNHLWYFGSGTHGCVAREYALYGETKLQFYMESAEL</sequence>
<comment type="function">
    <text evidence="2">Cytochrome P450 monooxygenase; part of the cluster that mediates the biosynthesis of a highly modified cyclo-arginine-tryptophan dipeptide (cRW) (PubMed:36702957). The first step of the pathway is perfornmed by the arginine-containing cyclodipeptide synthase (RCPDS) avaA that acts as the scaffold-generating enzyme and is responsible for formation of the cyclo-Arg-Trp (cRW) diketopiperazine. AvaB then acts as a multifunctional flavoenzyme that is responsible for generating the cyclo-Arg-formylkynurenine DKP, which can be deformylated by avaC. AvaB then further catalyzes an additional N-oxidation followed by cyclization and dehydration. The next step is an N-acetylation of the guanidine group catalyzed by the arginine N-acetyltransferase avaD. The roles of the additional enzymes identified within the ava cluster still have to be determined (PubMed:36702957).</text>
</comment>
<comment type="cofactor">
    <cofactor evidence="1">
        <name>heme</name>
        <dbReference type="ChEBI" id="CHEBI:30413"/>
    </cofactor>
</comment>
<comment type="pathway">
    <text evidence="5">Secondary metabolite biosynthesis.</text>
</comment>
<comment type="similarity">
    <text evidence="4">Belongs to the cytochrome P450 family.</text>
</comment>
<keyword id="KW-0349">Heme</keyword>
<keyword id="KW-0408">Iron</keyword>
<keyword id="KW-0479">Metal-binding</keyword>
<keyword id="KW-0503">Monooxygenase</keyword>
<keyword id="KW-0560">Oxidoreductase</keyword>
<proteinExistence type="inferred from homology"/>
<name>AVAI_ASPVE</name>
<dbReference type="EMBL" id="OP596311">
    <property type="protein sequence ID" value="UZP48221.1"/>
    <property type="molecule type" value="Genomic_DNA"/>
</dbReference>
<dbReference type="SMR" id="P9WEL0"/>
<dbReference type="GO" id="GO:0020037">
    <property type="term" value="F:heme binding"/>
    <property type="evidence" value="ECO:0007669"/>
    <property type="project" value="InterPro"/>
</dbReference>
<dbReference type="GO" id="GO:0005506">
    <property type="term" value="F:iron ion binding"/>
    <property type="evidence" value="ECO:0007669"/>
    <property type="project" value="InterPro"/>
</dbReference>
<dbReference type="GO" id="GO:0004497">
    <property type="term" value="F:monooxygenase activity"/>
    <property type="evidence" value="ECO:0007669"/>
    <property type="project" value="UniProtKB-KW"/>
</dbReference>
<dbReference type="GO" id="GO:0016705">
    <property type="term" value="F:oxidoreductase activity, acting on paired donors, with incorporation or reduction of molecular oxygen"/>
    <property type="evidence" value="ECO:0007669"/>
    <property type="project" value="InterPro"/>
</dbReference>
<dbReference type="GO" id="GO:0044550">
    <property type="term" value="P:secondary metabolite biosynthetic process"/>
    <property type="evidence" value="ECO:0007669"/>
    <property type="project" value="UniProtKB-ARBA"/>
</dbReference>
<dbReference type="Gene3D" id="1.10.630.10">
    <property type="entry name" value="Cytochrome P450"/>
    <property type="match status" value="1"/>
</dbReference>
<dbReference type="InterPro" id="IPR001128">
    <property type="entry name" value="Cyt_P450"/>
</dbReference>
<dbReference type="InterPro" id="IPR017972">
    <property type="entry name" value="Cyt_P450_CS"/>
</dbReference>
<dbReference type="InterPro" id="IPR002403">
    <property type="entry name" value="Cyt_P450_E_grp-IV"/>
</dbReference>
<dbReference type="InterPro" id="IPR036396">
    <property type="entry name" value="Cyt_P450_sf"/>
</dbReference>
<dbReference type="InterPro" id="IPR050121">
    <property type="entry name" value="Cytochrome_P450_monoxygenase"/>
</dbReference>
<dbReference type="PANTHER" id="PTHR24305">
    <property type="entry name" value="CYTOCHROME P450"/>
    <property type="match status" value="1"/>
</dbReference>
<dbReference type="PANTHER" id="PTHR24305:SF166">
    <property type="entry name" value="CYTOCHROME P450 12A4, MITOCHONDRIAL-RELATED"/>
    <property type="match status" value="1"/>
</dbReference>
<dbReference type="Pfam" id="PF00067">
    <property type="entry name" value="p450"/>
    <property type="match status" value="1"/>
</dbReference>
<dbReference type="PRINTS" id="PR00465">
    <property type="entry name" value="EP450IV"/>
</dbReference>
<dbReference type="SUPFAM" id="SSF48264">
    <property type="entry name" value="Cytochrome P450"/>
    <property type="match status" value="1"/>
</dbReference>
<dbReference type="PROSITE" id="PS00086">
    <property type="entry name" value="CYTOCHROME_P450"/>
    <property type="match status" value="1"/>
</dbReference>
<gene>
    <name evidence="3" type="primary">avaI</name>
</gene>
<organism>
    <name type="scientific">Aspergillus versicolor</name>
    <dbReference type="NCBI Taxonomy" id="46472"/>
    <lineage>
        <taxon>Eukaryota</taxon>
        <taxon>Fungi</taxon>
        <taxon>Dikarya</taxon>
        <taxon>Ascomycota</taxon>
        <taxon>Pezizomycotina</taxon>
        <taxon>Eurotiomycetes</taxon>
        <taxon>Eurotiomycetidae</taxon>
        <taxon>Eurotiales</taxon>
        <taxon>Aspergillaceae</taxon>
        <taxon>Aspergillus</taxon>
        <taxon>Aspergillus subgen. Nidulantes</taxon>
    </lineage>
</organism>
<feature type="chain" id="PRO_0000461011" description="Cytochrome P450 monooxygenase avaI">
    <location>
        <begin position="1"/>
        <end position="404"/>
    </location>
</feature>
<feature type="binding site" description="axial binding residue" evidence="1">
    <location>
        <position position="382"/>
    </location>
    <ligand>
        <name>heme</name>
        <dbReference type="ChEBI" id="CHEBI:30413"/>
    </ligand>
    <ligandPart>
        <name>Fe</name>
        <dbReference type="ChEBI" id="CHEBI:18248"/>
    </ligandPart>
</feature>
<reference key="1">
    <citation type="journal article" date="2023" name="Nat. Chem. Biol.">
        <title>Genome mining for unknown-unknown natural products.</title>
        <authorList>
            <person name="Yee D.A."/>
            <person name="Niwa K."/>
            <person name="Perlatti B."/>
            <person name="Chen M."/>
            <person name="Li Y."/>
            <person name="Tang Y."/>
        </authorList>
    </citation>
    <scope>NUCLEOTIDE SEQUENCE [GENOMIC DNA]</scope>
    <scope>FUNCTION</scope>
    <source>
        <strain>dI-29</strain>
    </source>
</reference>
<evidence type="ECO:0000250" key="1">
    <source>
        <dbReference type="UniProtKB" id="P04798"/>
    </source>
</evidence>
<evidence type="ECO:0000269" key="2">
    <source>
    </source>
</evidence>
<evidence type="ECO:0000303" key="3">
    <source>
    </source>
</evidence>
<evidence type="ECO:0000305" key="4"/>
<evidence type="ECO:0000305" key="5">
    <source>
    </source>
</evidence>
<protein>
    <recommendedName>
        <fullName evidence="3">Cytochrome P450 monooxygenase avaI</fullName>
    </recommendedName>
    <alternativeName>
        <fullName evidence="3">Ava biosynthesis cluster protein I</fullName>
    </alternativeName>
</protein>